<reference key="1">
    <citation type="journal article" date="2006" name="Science">
        <title>The genome of black cottonwood, Populus trichocarpa (Torr. &amp; Gray).</title>
        <authorList>
            <person name="Tuskan G.A."/>
            <person name="Difazio S."/>
            <person name="Jansson S."/>
            <person name="Bohlmann J."/>
            <person name="Grigoriev I."/>
            <person name="Hellsten U."/>
            <person name="Putnam N."/>
            <person name="Ralph S."/>
            <person name="Rombauts S."/>
            <person name="Salamov A."/>
            <person name="Schein J."/>
            <person name="Sterck L."/>
            <person name="Aerts A."/>
            <person name="Bhalerao R.R."/>
            <person name="Bhalerao R.P."/>
            <person name="Blaudez D."/>
            <person name="Boerjan W."/>
            <person name="Brun A."/>
            <person name="Brunner A."/>
            <person name="Busov V."/>
            <person name="Campbell M."/>
            <person name="Carlson J."/>
            <person name="Chalot M."/>
            <person name="Chapman J."/>
            <person name="Chen G.-L."/>
            <person name="Cooper D."/>
            <person name="Coutinho P.M."/>
            <person name="Couturier J."/>
            <person name="Covert S."/>
            <person name="Cronk Q."/>
            <person name="Cunningham R."/>
            <person name="Davis J."/>
            <person name="Degroeve S."/>
            <person name="Dejardin A."/>
            <person name="dePamphilis C.W."/>
            <person name="Detter J."/>
            <person name="Dirks B."/>
            <person name="Dubchak I."/>
            <person name="Duplessis S."/>
            <person name="Ehlting J."/>
            <person name="Ellis B."/>
            <person name="Gendler K."/>
            <person name="Goodstein D."/>
            <person name="Gribskov M."/>
            <person name="Grimwood J."/>
            <person name="Groover A."/>
            <person name="Gunter L."/>
            <person name="Hamberger B."/>
            <person name="Heinze B."/>
            <person name="Helariutta Y."/>
            <person name="Henrissat B."/>
            <person name="Holligan D."/>
            <person name="Holt R."/>
            <person name="Huang W."/>
            <person name="Islam-Faridi N."/>
            <person name="Jones S."/>
            <person name="Jones-Rhoades M."/>
            <person name="Jorgensen R."/>
            <person name="Joshi C."/>
            <person name="Kangasjaervi J."/>
            <person name="Karlsson J."/>
            <person name="Kelleher C."/>
            <person name="Kirkpatrick R."/>
            <person name="Kirst M."/>
            <person name="Kohler A."/>
            <person name="Kalluri U."/>
            <person name="Larimer F."/>
            <person name="Leebens-Mack J."/>
            <person name="Leple J.-C."/>
            <person name="Locascio P."/>
            <person name="Lou Y."/>
            <person name="Lucas S."/>
            <person name="Martin F."/>
            <person name="Montanini B."/>
            <person name="Napoli C."/>
            <person name="Nelson D.R."/>
            <person name="Nelson C."/>
            <person name="Nieminen K."/>
            <person name="Nilsson O."/>
            <person name="Pereda V."/>
            <person name="Peter G."/>
            <person name="Philippe R."/>
            <person name="Pilate G."/>
            <person name="Poliakov A."/>
            <person name="Razumovskaya J."/>
            <person name="Richardson P."/>
            <person name="Rinaldi C."/>
            <person name="Ritland K."/>
            <person name="Rouze P."/>
            <person name="Ryaboy D."/>
            <person name="Schmutz J."/>
            <person name="Schrader J."/>
            <person name="Segerman B."/>
            <person name="Shin H."/>
            <person name="Siddiqui A."/>
            <person name="Sterky F."/>
            <person name="Terry A."/>
            <person name="Tsai C.-J."/>
            <person name="Uberbacher E."/>
            <person name="Unneberg P."/>
            <person name="Vahala J."/>
            <person name="Wall K."/>
            <person name="Wessler S."/>
            <person name="Yang G."/>
            <person name="Yin T."/>
            <person name="Douglas C."/>
            <person name="Marra M."/>
            <person name="Sandberg G."/>
            <person name="Van de Peer Y."/>
            <person name="Rokhsar D.S."/>
        </authorList>
    </citation>
    <scope>NUCLEOTIDE SEQUENCE [LARGE SCALE GENOMIC DNA]</scope>
    <source>
        <strain>cv. Nisqually</strain>
    </source>
</reference>
<reference key="2">
    <citation type="submission" date="2008-12" db="EMBL/GenBank/DDBJ databases">
        <authorList>
            <consortium name="US DOE Joint Genome Institute (JGI-PGF)"/>
            <person name="Grigoriev I.V."/>
            <person name="Terry A."/>
            <person name="Salamov A.A."/>
            <person name="Otillar R."/>
            <person name="Lou Y."/>
            <person name="Lucas S."/>
            <person name="Hammon N."/>
            <person name="Glavina del Rio T."/>
            <person name="Detter J."/>
            <person name="Kalin E."/>
            <person name="Tice H."/>
            <person name="Pitluck S."/>
            <person name="Chapman J."/>
            <person name="Putnam N.H."/>
            <person name="Brunner A."/>
            <person name="Busov V."/>
            <person name="Campbell M."/>
            <person name="Chalot M."/>
            <person name="Covert S."/>
            <person name="Davis J."/>
            <person name="DiFazio S."/>
            <person name="Gribskov M."/>
            <person name="Gunter L."/>
            <person name="Hamberger B."/>
            <person name="Jansson S."/>
            <person name="Joshi C."/>
            <person name="Larimer F."/>
            <person name="Martin F."/>
            <person name="Napoli C."/>
            <person name="Nelson D."/>
            <person name="Ralph S."/>
            <person name="Rombauts S."/>
            <person name="Rouze P."/>
            <person name="Schrader J."/>
            <person name="Tsai C."/>
            <person name="Vahala J."/>
            <person name="Tuskan G."/>
            <person name="Rokhsar D."/>
        </authorList>
    </citation>
    <scope>GENOME REANNOTATION</scope>
    <source>
        <strain>cv. Nisqually</strain>
    </source>
</reference>
<reference key="3">
    <citation type="journal article" date="2014" name="Plant Physiol.">
        <title>Functional and evolutionary analysis of the CASPARIAN STRIP MEMBRANE DOMAIN PROTEIN family.</title>
        <authorList>
            <person name="Roppolo D."/>
            <person name="Boeckmann B."/>
            <person name="Pfister A."/>
            <person name="Boutet E."/>
            <person name="Rubio M.C."/>
            <person name="Denervaud-Tendon V."/>
            <person name="Vermeer J.E."/>
            <person name="Gheyselinck J."/>
            <person name="Xenarios I."/>
            <person name="Geldner N."/>
        </authorList>
    </citation>
    <scope>GENE FAMILY</scope>
    <scope>NOMENCLATURE</scope>
</reference>
<keyword id="KW-1003">Cell membrane</keyword>
<keyword id="KW-0472">Membrane</keyword>
<keyword id="KW-1185">Reference proteome</keyword>
<keyword id="KW-0812">Transmembrane</keyword>
<keyword id="KW-1133">Transmembrane helix</keyword>
<dbReference type="EMBL" id="CM009308">
    <property type="protein sequence ID" value="ERP49359.1"/>
    <property type="molecule type" value="Genomic_DNA"/>
</dbReference>
<dbReference type="RefSeq" id="XP_006371562.1">
    <property type="nucleotide sequence ID" value="XM_006371500.1"/>
</dbReference>
<dbReference type="SMR" id="B9N2D0"/>
<dbReference type="STRING" id="3694.B9N2D0"/>
<dbReference type="KEGG" id="pop:18108558"/>
<dbReference type="eggNOG" id="ENOG502RZXX">
    <property type="taxonomic scope" value="Eukaryota"/>
</dbReference>
<dbReference type="HOGENOM" id="CLU_066104_3_0_1"/>
<dbReference type="InParanoid" id="B9N2D0"/>
<dbReference type="OrthoDB" id="1906221at2759"/>
<dbReference type="Proteomes" id="UP000006729">
    <property type="component" value="Chromosome 19"/>
</dbReference>
<dbReference type="ExpressionAtlas" id="B9N2D0">
    <property type="expression patterns" value="baseline and differential"/>
</dbReference>
<dbReference type="GO" id="GO:0005886">
    <property type="term" value="C:plasma membrane"/>
    <property type="evidence" value="ECO:0000318"/>
    <property type="project" value="GO_Central"/>
</dbReference>
<dbReference type="InterPro" id="IPR006459">
    <property type="entry name" value="CASP/CASPL"/>
</dbReference>
<dbReference type="InterPro" id="IPR006702">
    <property type="entry name" value="CASP_dom"/>
</dbReference>
<dbReference type="InterPro" id="IPR044173">
    <property type="entry name" value="CASPL"/>
</dbReference>
<dbReference type="NCBIfam" id="TIGR01569">
    <property type="entry name" value="A_tha_TIGR01569"/>
    <property type="match status" value="1"/>
</dbReference>
<dbReference type="PANTHER" id="PTHR36488">
    <property type="entry name" value="CASP-LIKE PROTEIN 1U1"/>
    <property type="match status" value="1"/>
</dbReference>
<dbReference type="PANTHER" id="PTHR36488:SF8">
    <property type="entry name" value="CASP-LIKE PROTEIN 1U1"/>
    <property type="match status" value="1"/>
</dbReference>
<dbReference type="Pfam" id="PF04535">
    <property type="entry name" value="CASP_dom"/>
    <property type="match status" value="1"/>
</dbReference>
<name>CSPLK_POPTR</name>
<comment type="subunit">
    <text evidence="1">Homodimer and heterodimers.</text>
</comment>
<comment type="subcellular location">
    <subcellularLocation>
        <location evidence="1">Cell membrane</location>
        <topology evidence="1">Multi-pass membrane protein</topology>
    </subcellularLocation>
</comment>
<comment type="similarity">
    <text evidence="3">Belongs to the Casparian strip membrane proteins (CASP) family.</text>
</comment>
<proteinExistence type="evidence at transcript level"/>
<feature type="chain" id="PRO_0000391546" description="CASP-like protein 1C2">
    <location>
        <begin position="1"/>
        <end position="162"/>
    </location>
</feature>
<feature type="topological domain" description="Cytoplasmic" evidence="2">
    <location>
        <begin position="1"/>
        <end position="6"/>
    </location>
</feature>
<feature type="transmembrane region" description="Helical" evidence="2">
    <location>
        <begin position="7"/>
        <end position="27"/>
    </location>
</feature>
<feature type="topological domain" description="Extracellular" evidence="2">
    <location>
        <begin position="28"/>
        <end position="49"/>
    </location>
</feature>
<feature type="transmembrane region" description="Helical" evidence="2">
    <location>
        <begin position="50"/>
        <end position="70"/>
    </location>
</feature>
<feature type="topological domain" description="Cytoplasmic" evidence="2">
    <location>
        <begin position="71"/>
        <end position="79"/>
    </location>
</feature>
<feature type="transmembrane region" description="Helical" evidence="2">
    <location>
        <begin position="80"/>
        <end position="100"/>
    </location>
</feature>
<feature type="topological domain" description="Extracellular" evidence="2">
    <location>
        <begin position="101"/>
        <end position="130"/>
    </location>
</feature>
<feature type="transmembrane region" description="Helical" evidence="2">
    <location>
        <begin position="131"/>
        <end position="151"/>
    </location>
</feature>
<feature type="topological domain" description="Cytoplasmic" evidence="2">
    <location>
        <begin position="152"/>
        <end position="162"/>
    </location>
</feature>
<gene>
    <name type="ORF">POPTR_0019s13170g</name>
</gene>
<accession>B9N2D0</accession>
<accession>U5FGG2</accession>
<evidence type="ECO:0000250" key="1"/>
<evidence type="ECO:0000255" key="2"/>
<evidence type="ECO:0000305" key="3"/>
<organism>
    <name type="scientific">Populus trichocarpa</name>
    <name type="common">Western balsam poplar</name>
    <name type="synonym">Populus balsamifera subsp. trichocarpa</name>
    <dbReference type="NCBI Taxonomy" id="3694"/>
    <lineage>
        <taxon>Eukaryota</taxon>
        <taxon>Viridiplantae</taxon>
        <taxon>Streptophyta</taxon>
        <taxon>Embryophyta</taxon>
        <taxon>Tracheophyta</taxon>
        <taxon>Spermatophyta</taxon>
        <taxon>Magnoliopsida</taxon>
        <taxon>eudicotyledons</taxon>
        <taxon>Gunneridae</taxon>
        <taxon>Pentapetalae</taxon>
        <taxon>rosids</taxon>
        <taxon>fabids</taxon>
        <taxon>Malpighiales</taxon>
        <taxon>Salicaceae</taxon>
        <taxon>Saliceae</taxon>
        <taxon>Populus</taxon>
    </lineage>
</organism>
<protein>
    <recommendedName>
        <fullName>CASP-like protein 1C2</fullName>
        <shortName>PtCASPL1C2</shortName>
    </recommendedName>
</protein>
<sequence length="162" mass="17543">MMKPKRLLSLLLRLIAVGATLAAVIIMATSHEKGTFFAVSYEAKYTDTPAFKYFVIANAIVTVYGFLVLFHPPGSPLWRLVLALDLVFTMLLISSISAALAVAQVGKNGNSRAGWLPVCGQVTKYCNQVTGALVAGLIALITYIILLLHSIYTFLNPLLEKA</sequence>